<gene>
    <name evidence="6" type="primary">Apobr</name>
    <name type="synonym">Apob48r</name>
</gene>
<comment type="function">
    <text evidence="3">Macrophage receptor that binds to the apolipoprotein B48 (APOB) of dietary triglyceride (TG)-rich lipoproteins (TRL) or to a like domain of APOB in hypertriglyceridemic very low density lipoprotein (HTG-VLDL). Binds and internalizes TRL when out of the context of the macrophage. May provide essential lipids to reticuloendothelial cells. Could also be involved in foam cell formation with elevated TRL and remnant lipoprotein (RLP). Mediates the rapid high-affinity uptake of chylomicrons (CM), HTG-VLDL, and trypsinized (tryp) VLDL devoid of APOE in vitro in macrophages.</text>
</comment>
<comment type="subunit">
    <text evidence="1">Homodimer.</text>
</comment>
<comment type="subcellular location">
    <subcellularLocation>
        <location evidence="1">Cell membrane</location>
        <topology evidence="1">Peripheral membrane protein</topology>
    </subcellularLocation>
    <text evidence="1">Binds monocyte-macrophage membrane. Thought to be anchored in the membrane through an interaction with an integral membrane protein (By similarity).</text>
</comment>
<comment type="tissue specificity">
    <text evidence="3">Highly expressed in spleen, lung and skeletal muscle, and weakly in brain, heart, kidney, and testis.</text>
</comment>
<comment type="developmental stage">
    <text evidence="3">Finds at the highest levels in 7 dpc, then progressively lower at 11 dpc and 15 dpc, and finally very diminished at the 17 dpc.</text>
</comment>
<comment type="induction">
    <text evidence="4">Increased in high-fat diet ATM (adipose tissue macrophages).</text>
</comment>
<comment type="PTM">
    <text evidence="1">There are 2 forms in macrophages, the membrane-binding proteins 200 kDa (MBP 200) and 235 kDa (MBP 235), that can be reduced into a single active ligand-binding species with intermediate mobility (MBP 200R).</text>
</comment>
<reference key="1">
    <citation type="journal article" date="2002" name="J. Lipid Res.">
        <title>The murine macrophage apoB-48 receptor gene (Apob-48r): homology to the human receptor.</title>
        <authorList>
            <person name="Brown M.L."/>
            <person name="Yui K."/>
            <person name="Smith J.D."/>
            <person name="LeBoeuf R.C."/>
            <person name="Weng W."/>
            <person name="Umeda P.K."/>
            <person name="Li R."/>
            <person name="Song R."/>
            <person name="Gianturco S.H."/>
            <person name="Bradley W.A."/>
        </authorList>
    </citation>
    <scope>NUCLEOTIDE SEQUENCE [MRNA]</scope>
    <scope>FUNCTION</scope>
    <scope>TISSUE SPECIFICITY</scope>
    <scope>DEVELOPMENTAL STAGE</scope>
    <source>
        <strain>129</strain>
        <tissue>Macrophage</tissue>
    </source>
</reference>
<reference key="2">
    <citation type="journal article" date="2004" name="Genome Res.">
        <title>The status, quality, and expansion of the NIH full-length cDNA project: the Mammalian Gene Collection (MGC).</title>
        <authorList>
            <consortium name="The MGC Project Team"/>
        </authorList>
    </citation>
    <scope>NUCLEOTIDE SEQUENCE [LARGE SCALE MRNA]</scope>
    <source>
        <strain>FVB/N</strain>
        <tissue>Mammary tumor</tissue>
    </source>
</reference>
<reference key="3">
    <citation type="journal article" date="2007" name="Diabetes">
        <title>Increased inflammatory properties of adipose tissue macrophages recruited during diet-induced obesity.</title>
        <authorList>
            <person name="Lumeng C.N."/>
            <person name="Deyoung S.M."/>
            <person name="Bodzin J.L."/>
            <person name="Saltiel A.R."/>
        </authorList>
    </citation>
    <scope>INDUCTION</scope>
</reference>
<reference key="4">
    <citation type="journal article" date="2009" name="Immunity">
        <title>The phagosomal proteome in interferon-gamma-activated macrophages.</title>
        <authorList>
            <person name="Trost M."/>
            <person name="English L."/>
            <person name="Lemieux S."/>
            <person name="Courcelles M."/>
            <person name="Desjardins M."/>
            <person name="Thibault P."/>
        </authorList>
    </citation>
    <scope>PHOSPHORYLATION [LARGE SCALE ANALYSIS] AT SER-364; SER-484 AND SER-520</scope>
    <scope>IDENTIFICATION BY MASS SPECTROMETRY [LARGE SCALE ANALYSIS]</scope>
</reference>
<reference key="5">
    <citation type="journal article" date="2010" name="Cell">
        <title>A tissue-specific atlas of mouse protein phosphorylation and expression.</title>
        <authorList>
            <person name="Huttlin E.L."/>
            <person name="Jedrychowski M.P."/>
            <person name="Elias J.E."/>
            <person name="Goswami T."/>
            <person name="Rad R."/>
            <person name="Beausoleil S.A."/>
            <person name="Villen J."/>
            <person name="Haas W."/>
            <person name="Sowa M.E."/>
            <person name="Gygi S.P."/>
        </authorList>
    </citation>
    <scope>IDENTIFICATION BY MASS SPECTROMETRY [LARGE SCALE ANALYSIS]</scope>
    <source>
        <tissue>Lung</tissue>
        <tissue>Spleen</tissue>
    </source>
</reference>
<protein>
    <recommendedName>
        <fullName evidence="5">Apolipoprotein B receptor</fullName>
    </recommendedName>
    <alternativeName>
        <fullName>Apolipoprotein B-100 receptor</fullName>
        <shortName>Apolipoprotein B48 receptor</shortName>
        <shortName>apoB-48R</shortName>
    </alternativeName>
</protein>
<feature type="chain" id="PRO_0000327264" description="Apolipoprotein B receptor">
    <location>
        <begin position="1"/>
        <end position="942"/>
    </location>
</feature>
<feature type="region of interest" description="Disordered" evidence="2">
    <location>
        <begin position="66"/>
        <end position="212"/>
    </location>
</feature>
<feature type="region of interest" description="Disordered" evidence="2">
    <location>
        <begin position="240"/>
        <end position="269"/>
    </location>
</feature>
<feature type="region of interest" description="Disordered" evidence="2">
    <location>
        <begin position="283"/>
        <end position="487"/>
    </location>
</feature>
<feature type="region of interest" description="Disordered" evidence="2">
    <location>
        <begin position="501"/>
        <end position="607"/>
    </location>
</feature>
<feature type="region of interest" description="Disordered" evidence="2">
    <location>
        <begin position="671"/>
        <end position="942"/>
    </location>
</feature>
<feature type="compositionally biased region" description="Basic and acidic residues" evidence="2">
    <location>
        <begin position="106"/>
        <end position="123"/>
    </location>
</feature>
<feature type="compositionally biased region" description="Basic and acidic residues" evidence="2">
    <location>
        <begin position="132"/>
        <end position="143"/>
    </location>
</feature>
<feature type="compositionally biased region" description="Basic and acidic residues" evidence="2">
    <location>
        <begin position="240"/>
        <end position="252"/>
    </location>
</feature>
<feature type="compositionally biased region" description="Basic and acidic residues" evidence="2">
    <location>
        <begin position="312"/>
        <end position="330"/>
    </location>
</feature>
<feature type="compositionally biased region" description="Basic and acidic residues" evidence="2">
    <location>
        <begin position="338"/>
        <end position="352"/>
    </location>
</feature>
<feature type="compositionally biased region" description="Acidic residues" evidence="2">
    <location>
        <begin position="353"/>
        <end position="370"/>
    </location>
</feature>
<feature type="compositionally biased region" description="Basic and acidic residues" evidence="2">
    <location>
        <begin position="384"/>
        <end position="397"/>
    </location>
</feature>
<feature type="compositionally biased region" description="Acidic residues" evidence="2">
    <location>
        <begin position="415"/>
        <end position="425"/>
    </location>
</feature>
<feature type="compositionally biased region" description="Basic and acidic residues" evidence="2">
    <location>
        <begin position="444"/>
        <end position="458"/>
    </location>
</feature>
<feature type="compositionally biased region" description="Basic and acidic residues" evidence="2">
    <location>
        <begin position="466"/>
        <end position="475"/>
    </location>
</feature>
<feature type="compositionally biased region" description="Basic and acidic residues" evidence="2">
    <location>
        <begin position="514"/>
        <end position="531"/>
    </location>
</feature>
<feature type="compositionally biased region" description="Basic and acidic residues" evidence="2">
    <location>
        <begin position="672"/>
        <end position="687"/>
    </location>
</feature>
<feature type="compositionally biased region" description="Acidic residues" evidence="2">
    <location>
        <begin position="709"/>
        <end position="721"/>
    </location>
</feature>
<feature type="compositionally biased region" description="Low complexity" evidence="2">
    <location>
        <begin position="837"/>
        <end position="853"/>
    </location>
</feature>
<feature type="compositionally biased region" description="Basic residues" evidence="2">
    <location>
        <begin position="854"/>
        <end position="863"/>
    </location>
</feature>
<feature type="modified residue" description="Phosphoserine" evidence="7">
    <location>
        <position position="364"/>
    </location>
</feature>
<feature type="modified residue" description="Phosphoserine" evidence="7">
    <location>
        <position position="484"/>
    </location>
</feature>
<feature type="modified residue" description="Phosphoserine" evidence="7">
    <location>
        <position position="520"/>
    </location>
</feature>
<evidence type="ECO:0000250" key="1"/>
<evidence type="ECO:0000256" key="2">
    <source>
        <dbReference type="SAM" id="MobiDB-lite"/>
    </source>
</evidence>
<evidence type="ECO:0000269" key="3">
    <source>
    </source>
</evidence>
<evidence type="ECO:0000269" key="4">
    <source>
    </source>
</evidence>
<evidence type="ECO:0000305" key="5"/>
<evidence type="ECO:0000312" key="6">
    <source>
        <dbReference type="MGI" id="MGI:2176230"/>
    </source>
</evidence>
<evidence type="ECO:0007744" key="7">
    <source>
    </source>
</evidence>
<proteinExistence type="evidence at protein level"/>
<organism>
    <name type="scientific">Mus musculus</name>
    <name type="common">Mouse</name>
    <dbReference type="NCBI Taxonomy" id="10090"/>
    <lineage>
        <taxon>Eukaryota</taxon>
        <taxon>Metazoa</taxon>
        <taxon>Chordata</taxon>
        <taxon>Craniata</taxon>
        <taxon>Vertebrata</taxon>
        <taxon>Euteleostomi</taxon>
        <taxon>Mammalia</taxon>
        <taxon>Eutheria</taxon>
        <taxon>Euarchontoglires</taxon>
        <taxon>Glires</taxon>
        <taxon>Rodentia</taxon>
        <taxon>Myomorpha</taxon>
        <taxon>Muroidea</taxon>
        <taxon>Muridae</taxon>
        <taxon>Murinae</taxon>
        <taxon>Mus</taxon>
        <taxon>Mus</taxon>
    </lineage>
</organism>
<accession>Q8VBT6</accession>
<dbReference type="EMBL" id="AF141335">
    <property type="protein sequence ID" value="AAL54862.1"/>
    <property type="molecule type" value="mRNA"/>
</dbReference>
<dbReference type="EMBL" id="AF141336">
    <property type="protein sequence ID" value="AAL54863.1"/>
    <property type="molecule type" value="Genomic_DNA"/>
</dbReference>
<dbReference type="EMBL" id="BC030718">
    <property type="protein sequence ID" value="AAH30718.1"/>
    <property type="molecule type" value="mRNA"/>
</dbReference>
<dbReference type="CCDS" id="CCDS21834.1"/>
<dbReference type="RefSeq" id="NP_612183.1">
    <property type="nucleotide sequence ID" value="NM_138310.1"/>
</dbReference>
<dbReference type="SMR" id="Q8VBT6"/>
<dbReference type="BioGRID" id="228601">
    <property type="interactions" value="2"/>
</dbReference>
<dbReference type="FunCoup" id="Q8VBT6">
    <property type="interactions" value="107"/>
</dbReference>
<dbReference type="STRING" id="10090.ENSMUSP00000042028"/>
<dbReference type="iPTMnet" id="Q8VBT6"/>
<dbReference type="PhosphoSitePlus" id="Q8VBT6"/>
<dbReference type="SwissPalm" id="Q8VBT6"/>
<dbReference type="CPTAC" id="non-CPTAC-3448"/>
<dbReference type="jPOST" id="Q8VBT6"/>
<dbReference type="PaxDb" id="10090-ENSMUSP00000042028"/>
<dbReference type="PeptideAtlas" id="Q8VBT6"/>
<dbReference type="ProteomicsDB" id="296337"/>
<dbReference type="Pumba" id="Q8VBT6"/>
<dbReference type="Antibodypedia" id="26469">
    <property type="antibodies" value="240 antibodies from 22 providers"/>
</dbReference>
<dbReference type="DNASU" id="171504"/>
<dbReference type="Ensembl" id="ENSMUST00000039522.8">
    <property type="protein sequence ID" value="ENSMUSP00000042028.7"/>
    <property type="gene ID" value="ENSMUSG00000042759.13"/>
</dbReference>
<dbReference type="GeneID" id="171504"/>
<dbReference type="KEGG" id="mmu:171504"/>
<dbReference type="UCSC" id="uc009jsb.1">
    <property type="organism name" value="mouse"/>
</dbReference>
<dbReference type="AGR" id="MGI:2176230"/>
<dbReference type="CTD" id="55911"/>
<dbReference type="MGI" id="MGI:2176230">
    <property type="gene designation" value="Apobr"/>
</dbReference>
<dbReference type="VEuPathDB" id="HostDB:ENSMUSG00000042759"/>
<dbReference type="eggNOG" id="ENOG502SSHE">
    <property type="taxonomic scope" value="Eukaryota"/>
</dbReference>
<dbReference type="GeneTree" id="ENSGT00530000065031"/>
<dbReference type="HOGENOM" id="CLU_006101_0_0_1"/>
<dbReference type="InParanoid" id="Q8VBT6"/>
<dbReference type="OMA" id="GTHQGDT"/>
<dbReference type="OrthoDB" id="9450656at2759"/>
<dbReference type="PhylomeDB" id="Q8VBT6"/>
<dbReference type="TreeFam" id="TF337147"/>
<dbReference type="Reactome" id="R-MMU-8964046">
    <property type="pathway name" value="VLDL clearance"/>
</dbReference>
<dbReference type="BioGRID-ORCS" id="171504">
    <property type="hits" value="2 hits in 79 CRISPR screens"/>
</dbReference>
<dbReference type="ChiTaRS" id="Apobr">
    <property type="organism name" value="mouse"/>
</dbReference>
<dbReference type="PRO" id="PR:Q8VBT6"/>
<dbReference type="Proteomes" id="UP000000589">
    <property type="component" value="Chromosome 7"/>
</dbReference>
<dbReference type="RNAct" id="Q8VBT6">
    <property type="molecule type" value="protein"/>
</dbReference>
<dbReference type="Bgee" id="ENSMUSG00000042759">
    <property type="expression patterns" value="Expressed in granulocyte and 77 other cell types or tissues"/>
</dbReference>
<dbReference type="ExpressionAtlas" id="Q8VBT6">
    <property type="expression patterns" value="baseline and differential"/>
</dbReference>
<dbReference type="GO" id="GO:0042627">
    <property type="term" value="C:chylomicron"/>
    <property type="evidence" value="ECO:0007669"/>
    <property type="project" value="UniProtKB-KW"/>
</dbReference>
<dbReference type="GO" id="GO:0034362">
    <property type="term" value="C:low-density lipoprotein particle"/>
    <property type="evidence" value="ECO:0007669"/>
    <property type="project" value="UniProtKB-KW"/>
</dbReference>
<dbReference type="GO" id="GO:0005886">
    <property type="term" value="C:plasma membrane"/>
    <property type="evidence" value="ECO:0007669"/>
    <property type="project" value="UniProtKB-SubCell"/>
</dbReference>
<dbReference type="GO" id="GO:0034361">
    <property type="term" value="C:very-low-density lipoprotein particle"/>
    <property type="evidence" value="ECO:0007669"/>
    <property type="project" value="UniProtKB-KW"/>
</dbReference>
<dbReference type="GO" id="GO:0030229">
    <property type="term" value="F:very-low-density lipoprotein particle receptor activity"/>
    <property type="evidence" value="ECO:0000314"/>
    <property type="project" value="MGI"/>
</dbReference>
<dbReference type="GO" id="GO:0008203">
    <property type="term" value="P:cholesterol metabolic process"/>
    <property type="evidence" value="ECO:0007669"/>
    <property type="project" value="UniProtKB-KW"/>
</dbReference>
<dbReference type="GO" id="GO:0006869">
    <property type="term" value="P:lipid transport"/>
    <property type="evidence" value="ECO:0007669"/>
    <property type="project" value="UniProtKB-KW"/>
</dbReference>
<dbReference type="GO" id="GO:0006641">
    <property type="term" value="P:triglyceride metabolic process"/>
    <property type="evidence" value="ECO:0000314"/>
    <property type="project" value="MGI"/>
</dbReference>
<dbReference type="InterPro" id="IPR026158">
    <property type="entry name" value="ApolipoprotB_rcpt"/>
</dbReference>
<dbReference type="PANTHER" id="PTHR15964:SF0">
    <property type="entry name" value="APOLIPOPROTEIN B RECEPTOR"/>
    <property type="match status" value="1"/>
</dbReference>
<dbReference type="PANTHER" id="PTHR15964">
    <property type="entry name" value="APOLIPOPROTEIN B48 RECEPTOR"/>
    <property type="match status" value="1"/>
</dbReference>
<name>APOBR_MOUSE</name>
<sequence length="942" mass="102705">MDFLRLRLPGLHQALRGALDSFSAFVSYLVGDTVPTVERQTQAAEELGEVTEGKVVGEEAQEVLEGLRSGQSEGVEAPEETRRCQEGSLAGEQTWGWRADSSARPQAERQDTGSWKAAEDARGQEPSVPLKPEAEPGTHRDRSSNTAQEIWEHGEEEASSGEPLRTCEQKEEEEEVVRAAESGMAEGVESQPTWHSEPGGNAGTEGQHVTEDSKEIDWVAKDMVAEIEWFGAKGIDKEEERMVPMRDGERARAQGTQCPGAESEDQAMLSREAWTVSDREGADSLGVQGTEYGSDPGDNFPGTTGRVWVLEEADKGDQQDEVDEKREAEVRFPIQTLEAERTGEMTEGHIAEEEAMGEQETEGSFEDEERQDLAIRDNGVSLEEEVRAEESSREKRNSWATEPTLVLDTEAKDEPDWEDSPEVSTEELFVGERSEAAQMTPEVLRVKVTEGQDPELVRHSQALTKQLEEGQKGQEETSGAPDLSPERVLSLKEYPGPVGFAGPELEAWGNWSRGVDRRNSQEVKADAEAGKEQTATEQAVEIRAEGGQEAQQPEVFGSGGEEALTSVALNPELEGSQGAEAGTEESVEESKPTENEAAEEEAVVPWEADGTCRKRRLEEVTLSLQDSEDTETSYLAEEIIVGIRAVDTEEGPKWEAGLAPETELGKAWCSEGRGEAGRGTELEETTEKQSGQEVGLVGSAEKVSGYDIQEIDGTEEGEQAEMETSVMAEDIRGTDGVTLGSQAERAEGSITPMETEGLLRDQMLLEEEAGGGQSREQKVHNSEGEIQTLDDSSDQEGQQTHQIPTVAVPGPLESAEATAGAPGDVHSNWNEALLPGSRLDVSVPRSRVLLSRSSSRRRSRPSFHRISVPEPQCDPPSPQPQAERPVPEQSSLQLEETPELSATKPEGTPVPARRKMLGRGFGFAHPGMMQELQARLSQPKPQ</sequence>
<keyword id="KW-0065">Atherosclerosis</keyword>
<keyword id="KW-1003">Cell membrane</keyword>
<keyword id="KW-0153">Cholesterol metabolism</keyword>
<keyword id="KW-0162">Chylomicron</keyword>
<keyword id="KW-0427">LDL</keyword>
<keyword id="KW-0443">Lipid metabolism</keyword>
<keyword id="KW-0445">Lipid transport</keyword>
<keyword id="KW-0449">Lipoprotein</keyword>
<keyword id="KW-0472">Membrane</keyword>
<keyword id="KW-0597">Phosphoprotein</keyword>
<keyword id="KW-0675">Receptor</keyword>
<keyword id="KW-1185">Reference proteome</keyword>
<keyword id="KW-0753">Steroid metabolism</keyword>
<keyword id="KW-1207">Sterol metabolism</keyword>
<keyword id="KW-0813">Transport</keyword>
<keyword id="KW-0850">VLDL</keyword>